<proteinExistence type="inferred from homology"/>
<organism>
    <name type="scientific">Candida glabrata (strain ATCC 2001 / BCRC 20586 / JCM 3761 / NBRC 0622 / NRRL Y-65 / CBS 138)</name>
    <name type="common">Yeast</name>
    <name type="synonym">Nakaseomyces glabratus</name>
    <dbReference type="NCBI Taxonomy" id="284593"/>
    <lineage>
        <taxon>Eukaryota</taxon>
        <taxon>Fungi</taxon>
        <taxon>Dikarya</taxon>
        <taxon>Ascomycota</taxon>
        <taxon>Saccharomycotina</taxon>
        <taxon>Saccharomycetes</taxon>
        <taxon>Saccharomycetales</taxon>
        <taxon>Saccharomycetaceae</taxon>
        <taxon>Nakaseomyces</taxon>
    </lineage>
</organism>
<reference key="1">
    <citation type="journal article" date="2004" name="Nature">
        <title>Genome evolution in yeasts.</title>
        <authorList>
            <person name="Dujon B."/>
            <person name="Sherman D."/>
            <person name="Fischer G."/>
            <person name="Durrens P."/>
            <person name="Casaregola S."/>
            <person name="Lafontaine I."/>
            <person name="de Montigny J."/>
            <person name="Marck C."/>
            <person name="Neuveglise C."/>
            <person name="Talla E."/>
            <person name="Goffard N."/>
            <person name="Frangeul L."/>
            <person name="Aigle M."/>
            <person name="Anthouard V."/>
            <person name="Babour A."/>
            <person name="Barbe V."/>
            <person name="Barnay S."/>
            <person name="Blanchin S."/>
            <person name="Beckerich J.-M."/>
            <person name="Beyne E."/>
            <person name="Bleykasten C."/>
            <person name="Boisrame A."/>
            <person name="Boyer J."/>
            <person name="Cattolico L."/>
            <person name="Confanioleri F."/>
            <person name="de Daruvar A."/>
            <person name="Despons L."/>
            <person name="Fabre E."/>
            <person name="Fairhead C."/>
            <person name="Ferry-Dumazet H."/>
            <person name="Groppi A."/>
            <person name="Hantraye F."/>
            <person name="Hennequin C."/>
            <person name="Jauniaux N."/>
            <person name="Joyet P."/>
            <person name="Kachouri R."/>
            <person name="Kerrest A."/>
            <person name="Koszul R."/>
            <person name="Lemaire M."/>
            <person name="Lesur I."/>
            <person name="Ma L."/>
            <person name="Muller H."/>
            <person name="Nicaud J.-M."/>
            <person name="Nikolski M."/>
            <person name="Oztas S."/>
            <person name="Ozier-Kalogeropoulos O."/>
            <person name="Pellenz S."/>
            <person name="Potier S."/>
            <person name="Richard G.-F."/>
            <person name="Straub M.-L."/>
            <person name="Suleau A."/>
            <person name="Swennen D."/>
            <person name="Tekaia F."/>
            <person name="Wesolowski-Louvel M."/>
            <person name="Westhof E."/>
            <person name="Wirth B."/>
            <person name="Zeniou-Meyer M."/>
            <person name="Zivanovic Y."/>
            <person name="Bolotin-Fukuhara M."/>
            <person name="Thierry A."/>
            <person name="Bouchier C."/>
            <person name="Caudron B."/>
            <person name="Scarpelli C."/>
            <person name="Gaillardin C."/>
            <person name="Weissenbach J."/>
            <person name="Wincker P."/>
            <person name="Souciet J.-L."/>
        </authorList>
    </citation>
    <scope>NUCLEOTIDE SEQUENCE [LARGE SCALE GENOMIC DNA]</scope>
    <source>
        <strain>ATCC 2001 / BCRC 20586 / JCM 3761 / NBRC 0622 / NRRL Y-65 / CBS 138</strain>
    </source>
</reference>
<name>DOHH_CANGA</name>
<dbReference type="EC" id="1.14.99.29" evidence="1"/>
<dbReference type="EMBL" id="CR380952">
    <property type="protein sequence ID" value="CAG58915.1"/>
    <property type="molecule type" value="Genomic_DNA"/>
</dbReference>
<dbReference type="RefSeq" id="XP_445991.1">
    <property type="nucleotide sequence ID" value="XM_445991.1"/>
</dbReference>
<dbReference type="SMR" id="Q6FUV3"/>
<dbReference type="FunCoup" id="Q6FUV3">
    <property type="interactions" value="972"/>
</dbReference>
<dbReference type="STRING" id="284593.Q6FUV3"/>
<dbReference type="EnsemblFungi" id="CAGL0F00407g-T">
    <property type="protein sequence ID" value="CAGL0F00407g-T-p1"/>
    <property type="gene ID" value="CAGL0F00407g"/>
</dbReference>
<dbReference type="KEGG" id="cgr:2887799"/>
<dbReference type="CGD" id="CAL0129185">
    <property type="gene designation" value="CAGL0F00407g"/>
</dbReference>
<dbReference type="VEuPathDB" id="FungiDB:B1J91_F00407g"/>
<dbReference type="VEuPathDB" id="FungiDB:CAGL0F00407g"/>
<dbReference type="eggNOG" id="KOG0567">
    <property type="taxonomic scope" value="Eukaryota"/>
</dbReference>
<dbReference type="HOGENOM" id="CLU_053974_0_0_1"/>
<dbReference type="InParanoid" id="Q6FUV3"/>
<dbReference type="OMA" id="LQEPCSI"/>
<dbReference type="UniPathway" id="UPA00354"/>
<dbReference type="Proteomes" id="UP000002428">
    <property type="component" value="Chromosome F"/>
</dbReference>
<dbReference type="GO" id="GO:0005737">
    <property type="term" value="C:cytoplasm"/>
    <property type="evidence" value="ECO:0007669"/>
    <property type="project" value="UniProtKB-SubCell"/>
</dbReference>
<dbReference type="GO" id="GO:0005634">
    <property type="term" value="C:nucleus"/>
    <property type="evidence" value="ECO:0007669"/>
    <property type="project" value="UniProtKB-SubCell"/>
</dbReference>
<dbReference type="GO" id="GO:0019135">
    <property type="term" value="F:deoxyhypusine monooxygenase activity"/>
    <property type="evidence" value="ECO:0007669"/>
    <property type="project" value="UniProtKB-UniRule"/>
</dbReference>
<dbReference type="GO" id="GO:0046872">
    <property type="term" value="F:metal ion binding"/>
    <property type="evidence" value="ECO:0007669"/>
    <property type="project" value="UniProtKB-KW"/>
</dbReference>
<dbReference type="GO" id="GO:0000226">
    <property type="term" value="P:microtubule cytoskeleton organization"/>
    <property type="evidence" value="ECO:0007669"/>
    <property type="project" value="EnsemblFungi"/>
</dbReference>
<dbReference type="FunFam" id="1.25.10.10:FF:000099">
    <property type="entry name" value="Deoxyhypusine hydroxylase"/>
    <property type="match status" value="1"/>
</dbReference>
<dbReference type="Gene3D" id="1.25.10.10">
    <property type="entry name" value="Leucine-rich Repeat Variant"/>
    <property type="match status" value="2"/>
</dbReference>
<dbReference type="HAMAP" id="MF_03101">
    <property type="entry name" value="Deoxyhypusine_hydroxylase"/>
    <property type="match status" value="1"/>
</dbReference>
<dbReference type="InterPro" id="IPR011989">
    <property type="entry name" value="ARM-like"/>
</dbReference>
<dbReference type="InterPro" id="IPR016024">
    <property type="entry name" value="ARM-type_fold"/>
</dbReference>
<dbReference type="InterPro" id="IPR027517">
    <property type="entry name" value="Deoxyhypusine_hydroxylase"/>
</dbReference>
<dbReference type="InterPro" id="IPR004155">
    <property type="entry name" value="PBS_lyase_HEAT"/>
</dbReference>
<dbReference type="PANTHER" id="PTHR12697:SF5">
    <property type="entry name" value="DEOXYHYPUSINE HYDROXYLASE"/>
    <property type="match status" value="1"/>
</dbReference>
<dbReference type="PANTHER" id="PTHR12697">
    <property type="entry name" value="PBS LYASE HEAT-LIKE PROTEIN"/>
    <property type="match status" value="1"/>
</dbReference>
<dbReference type="Pfam" id="PF13646">
    <property type="entry name" value="HEAT_2"/>
    <property type="match status" value="2"/>
</dbReference>
<dbReference type="SMART" id="SM00567">
    <property type="entry name" value="EZ_HEAT"/>
    <property type="match status" value="5"/>
</dbReference>
<dbReference type="SUPFAM" id="SSF48371">
    <property type="entry name" value="ARM repeat"/>
    <property type="match status" value="1"/>
</dbReference>
<feature type="chain" id="PRO_0000283659" description="Deoxyhypusine hydroxylase">
    <location>
        <begin position="1"/>
        <end position="322"/>
    </location>
</feature>
<feature type="repeat" description="HEAT-like PBS-type 1">
    <location>
        <begin position="109"/>
        <end position="135"/>
    </location>
</feature>
<feature type="repeat" description="HEAT-like PBS-type 2">
    <location>
        <begin position="203"/>
        <end position="229"/>
    </location>
</feature>
<feature type="repeat" description="HEAT-like PBS-type 3">
    <location>
        <begin position="234"/>
        <end position="260"/>
    </location>
</feature>
<feature type="repeat" description="HEAT-like PBS-type 4">
    <location>
        <begin position="267"/>
        <end position="293"/>
    </location>
</feature>
<feature type="binding site" evidence="1">
    <location>
        <position position="78"/>
    </location>
    <ligand>
        <name>Fe cation</name>
        <dbReference type="ChEBI" id="CHEBI:24875"/>
        <label>1</label>
    </ligand>
</feature>
<feature type="binding site" evidence="1">
    <location>
        <position position="79"/>
    </location>
    <ligand>
        <name>Fe cation</name>
        <dbReference type="ChEBI" id="CHEBI:24875"/>
        <label>1</label>
    </ligand>
</feature>
<feature type="binding site" evidence="1">
    <location>
        <position position="111"/>
    </location>
    <ligand>
        <name>Fe cation</name>
        <dbReference type="ChEBI" id="CHEBI:24875"/>
        <label>1</label>
    </ligand>
</feature>
<feature type="binding site" evidence="1">
    <location>
        <position position="112"/>
    </location>
    <ligand>
        <name>Fe cation</name>
        <dbReference type="ChEBI" id="CHEBI:24875"/>
        <label>1</label>
    </ligand>
</feature>
<feature type="binding site" evidence="1">
    <location>
        <position position="236"/>
    </location>
    <ligand>
        <name>Fe cation</name>
        <dbReference type="ChEBI" id="CHEBI:24875"/>
        <label>2</label>
    </ligand>
</feature>
<feature type="binding site" evidence="1">
    <location>
        <position position="237"/>
    </location>
    <ligand>
        <name>Fe cation</name>
        <dbReference type="ChEBI" id="CHEBI:24875"/>
        <label>2</label>
    </ligand>
</feature>
<feature type="binding site" evidence="1">
    <location>
        <position position="269"/>
    </location>
    <ligand>
        <name>Fe cation</name>
        <dbReference type="ChEBI" id="CHEBI:24875"/>
        <label>2</label>
    </ligand>
</feature>
<feature type="binding site" evidence="1">
    <location>
        <position position="270"/>
    </location>
    <ligand>
        <name>Fe cation</name>
        <dbReference type="ChEBI" id="CHEBI:24875"/>
        <label>2</label>
    </ligand>
</feature>
<keyword id="KW-0963">Cytoplasm</keyword>
<keyword id="KW-0386">Hypusine biosynthesis</keyword>
<keyword id="KW-0408">Iron</keyword>
<keyword id="KW-0479">Metal-binding</keyword>
<keyword id="KW-0503">Monooxygenase</keyword>
<keyword id="KW-0539">Nucleus</keyword>
<keyword id="KW-0560">Oxidoreductase</keyword>
<keyword id="KW-1185">Reference proteome</keyword>
<keyword id="KW-0677">Repeat</keyword>
<evidence type="ECO:0000255" key="1">
    <source>
        <dbReference type="HAMAP-Rule" id="MF_03101"/>
    </source>
</evidence>
<comment type="function">
    <text evidence="1">Catalyzes the hydroxylation of the N(6)-(4-aminobutyl)-L-lysine intermediate to form hypusine, an essential post-translational modification only found in mature eIF-5A factor.</text>
</comment>
<comment type="catalytic activity">
    <reaction evidence="1">
        <text>[eIF5A protein]-deoxyhypusine + AH2 + O2 = [eIF5A protein]-hypusine + A + H2O</text>
        <dbReference type="Rhea" id="RHEA:14101"/>
        <dbReference type="Rhea" id="RHEA-COMP:10144"/>
        <dbReference type="Rhea" id="RHEA-COMP:12592"/>
        <dbReference type="ChEBI" id="CHEBI:13193"/>
        <dbReference type="ChEBI" id="CHEBI:15377"/>
        <dbReference type="ChEBI" id="CHEBI:15379"/>
        <dbReference type="ChEBI" id="CHEBI:17499"/>
        <dbReference type="ChEBI" id="CHEBI:82657"/>
        <dbReference type="ChEBI" id="CHEBI:91175"/>
        <dbReference type="EC" id="1.14.99.29"/>
    </reaction>
</comment>
<comment type="cofactor">
    <cofactor evidence="1">
        <name>Fe(2+)</name>
        <dbReference type="ChEBI" id="CHEBI:29033"/>
    </cofactor>
    <text evidence="1">Binds 2 Fe(2+) ions per subunit.</text>
</comment>
<comment type="pathway">
    <text evidence="1">Protein modification; eIF5A hypusination.</text>
</comment>
<comment type="subcellular location">
    <subcellularLocation>
        <location evidence="1">Cytoplasm</location>
    </subcellularLocation>
    <subcellularLocation>
        <location evidence="1">Nucleus</location>
    </subcellularLocation>
</comment>
<comment type="similarity">
    <text evidence="1">Belongs to the deoxyhypusine hydroxylase family.</text>
</comment>
<protein>
    <recommendedName>
        <fullName evidence="1">Deoxyhypusine hydroxylase</fullName>
        <shortName evidence="1">DOHH</shortName>
        <ecNumber evidence="1">1.14.99.29</ecNumber>
    </recommendedName>
    <alternativeName>
        <fullName evidence="1">Deoxyhypusine dioxygenase</fullName>
    </alternativeName>
    <alternativeName>
        <fullName evidence="1">Deoxyhypusine monooxygenase</fullName>
    </alternativeName>
</protein>
<sequence length="322" mass="35970">MSTNFEKHFEENVDDCNLEQLRDILVNKEGKSALANRFRALFNLKTAASEFEANPSDAEKAVQYMGETFGDNSELLKHEVAYVLGQTKNLKAAPLLRKTMLDLAQQPMVRHEAAEALGALGDKDSLEDLEKCLKNDPHVAVRETCELAIARINWQHSDAPTKESLQQSLYSSIDPAPPLALEKEYDLEELKKLLNDQEKPLFLRYRAMFRLRDIGTDEAVLALASGFNDPSALFKHEIAYVFGQMGSTAAVPSLTEVLGRKEEAPMVRHEAAEALGAIASEDALPILKQYLNDEVDVVRESAIVALDMWEYENSNELEYAPA</sequence>
<gene>
    <name evidence="1" type="primary">LIA1</name>
    <name type="ordered locus">CAGL0F00407g</name>
</gene>
<accession>Q6FUV3</accession>